<accession>Q0TIF5</accession>
<dbReference type="EC" id="2.5.1.55" evidence="1"/>
<dbReference type="EMBL" id="CP000247">
    <property type="protein sequence ID" value="ABG69274.1"/>
    <property type="molecule type" value="Genomic_DNA"/>
</dbReference>
<dbReference type="RefSeq" id="WP_000811053.1">
    <property type="nucleotide sequence ID" value="NC_008253.1"/>
</dbReference>
<dbReference type="SMR" id="Q0TIF5"/>
<dbReference type="KEGG" id="ecp:ECP_1263"/>
<dbReference type="HOGENOM" id="CLU_036666_0_0_6"/>
<dbReference type="UniPathway" id="UPA00030"/>
<dbReference type="UniPathway" id="UPA00357">
    <property type="reaction ID" value="UER00474"/>
</dbReference>
<dbReference type="Proteomes" id="UP000009182">
    <property type="component" value="Chromosome"/>
</dbReference>
<dbReference type="GO" id="GO:0005737">
    <property type="term" value="C:cytoplasm"/>
    <property type="evidence" value="ECO:0007669"/>
    <property type="project" value="UniProtKB-SubCell"/>
</dbReference>
<dbReference type="GO" id="GO:0008676">
    <property type="term" value="F:3-deoxy-8-phosphooctulonate synthase activity"/>
    <property type="evidence" value="ECO:0007669"/>
    <property type="project" value="UniProtKB-UniRule"/>
</dbReference>
<dbReference type="GO" id="GO:0019294">
    <property type="term" value="P:keto-3-deoxy-D-manno-octulosonic acid biosynthetic process"/>
    <property type="evidence" value="ECO:0007669"/>
    <property type="project" value="UniProtKB-UniRule"/>
</dbReference>
<dbReference type="FunFam" id="3.20.20.70:FF:000058">
    <property type="entry name" value="2-dehydro-3-deoxyphosphooctonate aldolase"/>
    <property type="match status" value="1"/>
</dbReference>
<dbReference type="Gene3D" id="3.20.20.70">
    <property type="entry name" value="Aldolase class I"/>
    <property type="match status" value="1"/>
</dbReference>
<dbReference type="HAMAP" id="MF_00056">
    <property type="entry name" value="KDO8P_synth"/>
    <property type="match status" value="1"/>
</dbReference>
<dbReference type="InterPro" id="IPR013785">
    <property type="entry name" value="Aldolase_TIM"/>
</dbReference>
<dbReference type="InterPro" id="IPR006218">
    <property type="entry name" value="DAHP1/KDSA"/>
</dbReference>
<dbReference type="InterPro" id="IPR006269">
    <property type="entry name" value="KDO8P_synthase"/>
</dbReference>
<dbReference type="NCBIfam" id="TIGR01362">
    <property type="entry name" value="KDO8P_synth"/>
    <property type="match status" value="1"/>
</dbReference>
<dbReference type="NCBIfam" id="NF003543">
    <property type="entry name" value="PRK05198.1"/>
    <property type="match status" value="1"/>
</dbReference>
<dbReference type="NCBIfam" id="NF009109">
    <property type="entry name" value="PRK12457.1"/>
    <property type="match status" value="1"/>
</dbReference>
<dbReference type="PANTHER" id="PTHR21057">
    <property type="entry name" value="PHOSPHO-2-DEHYDRO-3-DEOXYHEPTONATE ALDOLASE"/>
    <property type="match status" value="1"/>
</dbReference>
<dbReference type="Pfam" id="PF00793">
    <property type="entry name" value="DAHP_synth_1"/>
    <property type="match status" value="1"/>
</dbReference>
<dbReference type="SUPFAM" id="SSF51569">
    <property type="entry name" value="Aldolase"/>
    <property type="match status" value="1"/>
</dbReference>
<reference key="1">
    <citation type="journal article" date="2006" name="Mol. Microbiol.">
        <title>Role of pathogenicity island-associated integrases in the genome plasticity of uropathogenic Escherichia coli strain 536.</title>
        <authorList>
            <person name="Hochhut B."/>
            <person name="Wilde C."/>
            <person name="Balling G."/>
            <person name="Middendorf B."/>
            <person name="Dobrindt U."/>
            <person name="Brzuszkiewicz E."/>
            <person name="Gottschalk G."/>
            <person name="Carniel E."/>
            <person name="Hacker J."/>
        </authorList>
    </citation>
    <scope>NUCLEOTIDE SEQUENCE [LARGE SCALE GENOMIC DNA]</scope>
    <source>
        <strain>536 / UPEC</strain>
    </source>
</reference>
<feature type="chain" id="PRO_0000304450" description="2-dehydro-3-deoxyphosphooctonate aldolase">
    <location>
        <begin position="1"/>
        <end position="284"/>
    </location>
</feature>
<evidence type="ECO:0000255" key="1">
    <source>
        <dbReference type="HAMAP-Rule" id="MF_00056"/>
    </source>
</evidence>
<proteinExistence type="inferred from homology"/>
<gene>
    <name evidence="1" type="primary">kdsA</name>
    <name type="ordered locus">ECP_1263</name>
</gene>
<organism>
    <name type="scientific">Escherichia coli O6:K15:H31 (strain 536 / UPEC)</name>
    <dbReference type="NCBI Taxonomy" id="362663"/>
    <lineage>
        <taxon>Bacteria</taxon>
        <taxon>Pseudomonadati</taxon>
        <taxon>Pseudomonadota</taxon>
        <taxon>Gammaproteobacteria</taxon>
        <taxon>Enterobacterales</taxon>
        <taxon>Enterobacteriaceae</taxon>
        <taxon>Escherichia</taxon>
    </lineage>
</organism>
<sequence>MKQKVVSIGDINVANDLPFVLFGGMNVLESRDLAMRICEHYLTVTQKLGIPYVFKASFDKANRSSIHSYRGPGLEEGMKIFQELKQTFGVKIITDVHEPSQAQPVADVVDVIQLPAFLARQTDLVEAMAKTGAVINVKKPQFVSPGQMGNIVDKFKEGGNEKVILCDRGANFGYDNLVVDMLGFSIMKKVSGNSPVIFDVTHALQCRDPFGAPSGGRRAQVAELARAGMAVGLAGLFIEAHPDPEHAKCDGPSALPLAKLEPFLKQMKAIDDLVKGFEELDTSK</sequence>
<keyword id="KW-0963">Cytoplasm</keyword>
<keyword id="KW-0448">Lipopolysaccharide biosynthesis</keyword>
<keyword id="KW-0808">Transferase</keyword>
<protein>
    <recommendedName>
        <fullName evidence="1">2-dehydro-3-deoxyphosphooctonate aldolase</fullName>
        <ecNumber evidence="1">2.5.1.55</ecNumber>
    </recommendedName>
    <alternativeName>
        <fullName evidence="1">3-deoxy-D-manno-octulosonic acid 8-phosphate synthase</fullName>
    </alternativeName>
    <alternativeName>
        <fullName evidence="1">KDO-8-phosphate synthase</fullName>
        <shortName evidence="1">KDO 8-P synthase</shortName>
        <shortName evidence="1">KDOPS</shortName>
    </alternativeName>
    <alternativeName>
        <fullName evidence="1">Phospho-2-dehydro-3-deoxyoctonate aldolase</fullName>
    </alternativeName>
</protein>
<comment type="catalytic activity">
    <reaction evidence="1">
        <text>D-arabinose 5-phosphate + phosphoenolpyruvate + H2O = 3-deoxy-alpha-D-manno-2-octulosonate-8-phosphate + phosphate</text>
        <dbReference type="Rhea" id="RHEA:14053"/>
        <dbReference type="ChEBI" id="CHEBI:15377"/>
        <dbReference type="ChEBI" id="CHEBI:43474"/>
        <dbReference type="ChEBI" id="CHEBI:57693"/>
        <dbReference type="ChEBI" id="CHEBI:58702"/>
        <dbReference type="ChEBI" id="CHEBI:85985"/>
        <dbReference type="EC" id="2.5.1.55"/>
    </reaction>
</comment>
<comment type="pathway">
    <text evidence="1">Carbohydrate biosynthesis; 3-deoxy-D-manno-octulosonate biosynthesis; 3-deoxy-D-manno-octulosonate from D-ribulose 5-phosphate: step 2/3.</text>
</comment>
<comment type="pathway">
    <text evidence="1">Bacterial outer membrane biogenesis; lipopolysaccharide biosynthesis.</text>
</comment>
<comment type="subcellular location">
    <subcellularLocation>
        <location evidence="1">Cytoplasm</location>
    </subcellularLocation>
</comment>
<comment type="similarity">
    <text evidence="1">Belongs to the KdsA family.</text>
</comment>
<name>KDSA_ECOL5</name>